<keyword id="KW-0963">Cytoplasm</keyword>
<keyword id="KW-0251">Elongation factor</keyword>
<keyword id="KW-0342">GTP-binding</keyword>
<keyword id="KW-0547">Nucleotide-binding</keyword>
<keyword id="KW-0648">Protein biosynthesis</keyword>
<proteinExistence type="inferred from homology"/>
<gene>
    <name evidence="1" type="primary">fusA</name>
    <name type="ordered locus">WRi_000140</name>
</gene>
<reference key="1">
    <citation type="journal article" date="2009" name="Proc. Natl. Acad. Sci. U.S.A.">
        <title>The mosaic genome structure of the Wolbachia wRi strain infecting Drosophila simulans.</title>
        <authorList>
            <person name="Klasson L."/>
            <person name="Westberg J."/>
            <person name="Sapountzis P."/>
            <person name="Naeslund K."/>
            <person name="Lutnaes Y."/>
            <person name="Darby A.C."/>
            <person name="Veneti Z."/>
            <person name="Chen L."/>
            <person name="Braig H.R."/>
            <person name="Garrett R."/>
            <person name="Bourtzis K."/>
            <person name="Andersson S.G."/>
        </authorList>
    </citation>
    <scope>NUCLEOTIDE SEQUENCE [LARGE SCALE GENOMIC DNA]</scope>
    <source>
        <strain>wRi</strain>
    </source>
</reference>
<sequence length="691" mass="76401">MEIGISKYRNIGIMAHIDAGKTTTTERILFYTGKQNRIGEVHDGAASMDWMEQEKERGITITSAATTCFWNDHRVNIIDTPGHVDFTIEVERSLRVLDGAVAVFDGVAGVEPQSETVWRQADKYSVPRICFVNKMDRIGANFYRCVDMIKTKLGAAPLVIHLPIGSEKDFKGIIDLISMKAIIWQEETLGAKFSYEDIPSDLLDKAQEYRNLLLDAAAEMDDEAMNTYFESNDLPVDLLKKCVRNGTIKGKFVPVLCGSAFKNKGVQPLLDGVVDFLPSPIDVDVIVGIDPKDSEKKIEVKPSEKEKFVALAFKVMTDKFVGSLTFIRIYSGKLKSKSTVSNALKNETEGIGRMLLMHANNREDITEARAGDIVALVGLKKTTTGDTLCSVDFPILLERMEFPEPVIEIAVEPKTTSDQEKLGIALNRLVAEDPSLRMSVNAESGQTILKGMGELHLEIIVDRMKREFNVEANVGAPQVAYRETITKSVEIDYTHKKQSGGAGQFAKVKIKFEPLEPGSGFQFESKIVGGAIPKEYIPGVENGLELIKEGGIISGFPLIDFKATLLDGAFHEVDSSPLAFELAAKGAFKEMANKAGPKMLEPIMKVEIITPEEYMGDVMGDINSRRGNVADMLDLGNNSKIITASVPLANMFGYINVLRSMSQGRAQYSMHFSCYEQVPQYVVDELKLEYN</sequence>
<organism>
    <name type="scientific">Wolbachia sp. subsp. Drosophila simulans (strain wRi)</name>
    <dbReference type="NCBI Taxonomy" id="66084"/>
    <lineage>
        <taxon>Bacteria</taxon>
        <taxon>Pseudomonadati</taxon>
        <taxon>Pseudomonadota</taxon>
        <taxon>Alphaproteobacteria</taxon>
        <taxon>Rickettsiales</taxon>
        <taxon>Anaplasmataceae</taxon>
        <taxon>Wolbachieae</taxon>
        <taxon>Wolbachia</taxon>
    </lineage>
</organism>
<accession>C0R543</accession>
<comment type="function">
    <text evidence="1">Catalyzes the GTP-dependent ribosomal translocation step during translation elongation. During this step, the ribosome changes from the pre-translocational (PRE) to the post-translocational (POST) state as the newly formed A-site-bound peptidyl-tRNA and P-site-bound deacylated tRNA move to the P and E sites, respectively. Catalyzes the coordinated movement of the two tRNA molecules, the mRNA and conformational changes in the ribosome.</text>
</comment>
<comment type="subcellular location">
    <subcellularLocation>
        <location evidence="1">Cytoplasm</location>
    </subcellularLocation>
</comment>
<comment type="similarity">
    <text evidence="1">Belongs to the TRAFAC class translation factor GTPase superfamily. Classic translation factor GTPase family. EF-G/EF-2 subfamily.</text>
</comment>
<name>EFG_WOLWR</name>
<protein>
    <recommendedName>
        <fullName evidence="1">Elongation factor G</fullName>
        <shortName evidence="1">EF-G</shortName>
    </recommendedName>
</protein>
<dbReference type="EMBL" id="CP001391">
    <property type="protein sequence ID" value="ACN94885.1"/>
    <property type="molecule type" value="Genomic_DNA"/>
</dbReference>
<dbReference type="RefSeq" id="WP_010962308.1">
    <property type="nucleotide sequence ID" value="NZ_MKIF01000111.1"/>
</dbReference>
<dbReference type="SMR" id="C0R543"/>
<dbReference type="STRING" id="66084.WRi_000140"/>
<dbReference type="GeneID" id="70035511"/>
<dbReference type="KEGG" id="wri:WRi_000140"/>
<dbReference type="HOGENOM" id="CLU_002794_4_1_5"/>
<dbReference type="Proteomes" id="UP000001293">
    <property type="component" value="Chromosome"/>
</dbReference>
<dbReference type="GO" id="GO:0005737">
    <property type="term" value="C:cytoplasm"/>
    <property type="evidence" value="ECO:0007669"/>
    <property type="project" value="UniProtKB-SubCell"/>
</dbReference>
<dbReference type="GO" id="GO:0005525">
    <property type="term" value="F:GTP binding"/>
    <property type="evidence" value="ECO:0007669"/>
    <property type="project" value="UniProtKB-UniRule"/>
</dbReference>
<dbReference type="GO" id="GO:0003924">
    <property type="term" value="F:GTPase activity"/>
    <property type="evidence" value="ECO:0007669"/>
    <property type="project" value="InterPro"/>
</dbReference>
<dbReference type="GO" id="GO:0003746">
    <property type="term" value="F:translation elongation factor activity"/>
    <property type="evidence" value="ECO:0007669"/>
    <property type="project" value="UniProtKB-UniRule"/>
</dbReference>
<dbReference type="GO" id="GO:0032790">
    <property type="term" value="P:ribosome disassembly"/>
    <property type="evidence" value="ECO:0007669"/>
    <property type="project" value="TreeGrafter"/>
</dbReference>
<dbReference type="CDD" id="cd01886">
    <property type="entry name" value="EF-G"/>
    <property type="match status" value="1"/>
</dbReference>
<dbReference type="CDD" id="cd16262">
    <property type="entry name" value="EFG_III"/>
    <property type="match status" value="1"/>
</dbReference>
<dbReference type="CDD" id="cd01434">
    <property type="entry name" value="EFG_mtEFG1_IV"/>
    <property type="match status" value="1"/>
</dbReference>
<dbReference type="CDD" id="cd03713">
    <property type="entry name" value="EFG_mtEFG_C"/>
    <property type="match status" value="1"/>
</dbReference>
<dbReference type="CDD" id="cd04088">
    <property type="entry name" value="EFG_mtEFG_II"/>
    <property type="match status" value="1"/>
</dbReference>
<dbReference type="FunFam" id="2.40.30.10:FF:000006">
    <property type="entry name" value="Elongation factor G"/>
    <property type="match status" value="1"/>
</dbReference>
<dbReference type="FunFam" id="3.30.230.10:FF:000003">
    <property type="entry name" value="Elongation factor G"/>
    <property type="match status" value="1"/>
</dbReference>
<dbReference type="FunFam" id="3.30.70.240:FF:000001">
    <property type="entry name" value="Elongation factor G"/>
    <property type="match status" value="1"/>
</dbReference>
<dbReference type="FunFam" id="3.30.70.870:FF:000001">
    <property type="entry name" value="Elongation factor G"/>
    <property type="match status" value="1"/>
</dbReference>
<dbReference type="FunFam" id="3.40.50.300:FF:000029">
    <property type="entry name" value="Elongation factor G"/>
    <property type="match status" value="1"/>
</dbReference>
<dbReference type="Gene3D" id="3.30.230.10">
    <property type="match status" value="1"/>
</dbReference>
<dbReference type="Gene3D" id="3.30.70.240">
    <property type="match status" value="1"/>
</dbReference>
<dbReference type="Gene3D" id="3.30.70.870">
    <property type="entry name" value="Elongation Factor G (Translational Gtpase), domain 3"/>
    <property type="match status" value="1"/>
</dbReference>
<dbReference type="Gene3D" id="3.40.50.300">
    <property type="entry name" value="P-loop containing nucleotide triphosphate hydrolases"/>
    <property type="match status" value="1"/>
</dbReference>
<dbReference type="Gene3D" id="2.40.30.10">
    <property type="entry name" value="Translation factors"/>
    <property type="match status" value="1"/>
</dbReference>
<dbReference type="HAMAP" id="MF_00054_B">
    <property type="entry name" value="EF_G_EF_2_B"/>
    <property type="match status" value="1"/>
</dbReference>
<dbReference type="InterPro" id="IPR053905">
    <property type="entry name" value="EF-G-like_DII"/>
</dbReference>
<dbReference type="InterPro" id="IPR041095">
    <property type="entry name" value="EFG_II"/>
</dbReference>
<dbReference type="InterPro" id="IPR009022">
    <property type="entry name" value="EFG_III"/>
</dbReference>
<dbReference type="InterPro" id="IPR035647">
    <property type="entry name" value="EFG_III/V"/>
</dbReference>
<dbReference type="InterPro" id="IPR047872">
    <property type="entry name" value="EFG_IV"/>
</dbReference>
<dbReference type="InterPro" id="IPR035649">
    <property type="entry name" value="EFG_V"/>
</dbReference>
<dbReference type="InterPro" id="IPR000640">
    <property type="entry name" value="EFG_V-like"/>
</dbReference>
<dbReference type="InterPro" id="IPR031157">
    <property type="entry name" value="G_TR_CS"/>
</dbReference>
<dbReference type="InterPro" id="IPR027417">
    <property type="entry name" value="P-loop_NTPase"/>
</dbReference>
<dbReference type="InterPro" id="IPR020568">
    <property type="entry name" value="Ribosomal_Su5_D2-typ_SF"/>
</dbReference>
<dbReference type="InterPro" id="IPR014721">
    <property type="entry name" value="Ribsml_uS5_D2-typ_fold_subgr"/>
</dbReference>
<dbReference type="InterPro" id="IPR005225">
    <property type="entry name" value="Small_GTP-bd"/>
</dbReference>
<dbReference type="InterPro" id="IPR000795">
    <property type="entry name" value="T_Tr_GTP-bd_dom"/>
</dbReference>
<dbReference type="InterPro" id="IPR009000">
    <property type="entry name" value="Transl_B-barrel_sf"/>
</dbReference>
<dbReference type="InterPro" id="IPR004540">
    <property type="entry name" value="Transl_elong_EFG/EF2"/>
</dbReference>
<dbReference type="InterPro" id="IPR005517">
    <property type="entry name" value="Transl_elong_EFG/EF2_IV"/>
</dbReference>
<dbReference type="NCBIfam" id="TIGR00484">
    <property type="entry name" value="EF-G"/>
    <property type="match status" value="1"/>
</dbReference>
<dbReference type="NCBIfam" id="NF009381">
    <property type="entry name" value="PRK12740.1-5"/>
    <property type="match status" value="1"/>
</dbReference>
<dbReference type="NCBIfam" id="TIGR00231">
    <property type="entry name" value="small_GTP"/>
    <property type="match status" value="1"/>
</dbReference>
<dbReference type="PANTHER" id="PTHR43261:SF1">
    <property type="entry name" value="RIBOSOME-RELEASING FACTOR 2, MITOCHONDRIAL"/>
    <property type="match status" value="1"/>
</dbReference>
<dbReference type="PANTHER" id="PTHR43261">
    <property type="entry name" value="TRANSLATION ELONGATION FACTOR G-RELATED"/>
    <property type="match status" value="1"/>
</dbReference>
<dbReference type="Pfam" id="PF22042">
    <property type="entry name" value="EF-G_D2"/>
    <property type="match status" value="1"/>
</dbReference>
<dbReference type="Pfam" id="PF00679">
    <property type="entry name" value="EFG_C"/>
    <property type="match status" value="1"/>
</dbReference>
<dbReference type="Pfam" id="PF14492">
    <property type="entry name" value="EFG_III"/>
    <property type="match status" value="1"/>
</dbReference>
<dbReference type="Pfam" id="PF03764">
    <property type="entry name" value="EFG_IV"/>
    <property type="match status" value="1"/>
</dbReference>
<dbReference type="Pfam" id="PF00009">
    <property type="entry name" value="GTP_EFTU"/>
    <property type="match status" value="1"/>
</dbReference>
<dbReference type="PRINTS" id="PR00315">
    <property type="entry name" value="ELONGATNFCT"/>
</dbReference>
<dbReference type="SMART" id="SM00838">
    <property type="entry name" value="EFG_C"/>
    <property type="match status" value="1"/>
</dbReference>
<dbReference type="SMART" id="SM00889">
    <property type="entry name" value="EFG_IV"/>
    <property type="match status" value="1"/>
</dbReference>
<dbReference type="SUPFAM" id="SSF54980">
    <property type="entry name" value="EF-G C-terminal domain-like"/>
    <property type="match status" value="2"/>
</dbReference>
<dbReference type="SUPFAM" id="SSF52540">
    <property type="entry name" value="P-loop containing nucleoside triphosphate hydrolases"/>
    <property type="match status" value="1"/>
</dbReference>
<dbReference type="SUPFAM" id="SSF54211">
    <property type="entry name" value="Ribosomal protein S5 domain 2-like"/>
    <property type="match status" value="1"/>
</dbReference>
<dbReference type="SUPFAM" id="SSF50447">
    <property type="entry name" value="Translation proteins"/>
    <property type="match status" value="1"/>
</dbReference>
<dbReference type="PROSITE" id="PS00301">
    <property type="entry name" value="G_TR_1"/>
    <property type="match status" value="1"/>
</dbReference>
<dbReference type="PROSITE" id="PS51722">
    <property type="entry name" value="G_TR_2"/>
    <property type="match status" value="1"/>
</dbReference>
<feature type="chain" id="PRO_1000201496" description="Elongation factor G">
    <location>
        <begin position="1"/>
        <end position="691"/>
    </location>
</feature>
<feature type="domain" description="tr-type G">
    <location>
        <begin position="6"/>
        <end position="281"/>
    </location>
</feature>
<feature type="binding site" evidence="1">
    <location>
        <begin position="15"/>
        <end position="22"/>
    </location>
    <ligand>
        <name>GTP</name>
        <dbReference type="ChEBI" id="CHEBI:37565"/>
    </ligand>
</feature>
<feature type="binding site" evidence="1">
    <location>
        <begin position="79"/>
        <end position="83"/>
    </location>
    <ligand>
        <name>GTP</name>
        <dbReference type="ChEBI" id="CHEBI:37565"/>
    </ligand>
</feature>
<feature type="binding site" evidence="1">
    <location>
        <begin position="133"/>
        <end position="136"/>
    </location>
    <ligand>
        <name>GTP</name>
        <dbReference type="ChEBI" id="CHEBI:37565"/>
    </ligand>
</feature>
<evidence type="ECO:0000255" key="1">
    <source>
        <dbReference type="HAMAP-Rule" id="MF_00054"/>
    </source>
</evidence>